<accession>A5GDX1</accession>
<sequence length="449" mass="51362">MEKVWLEAQSNIKKVLTPQTYNTWIKPIRFHTLTDDNLTLEVPSKFIKEWVTEKYLPMIVEAISSLTSVKYQIEFKITEKIPLESKPVDNFTPVIKDNEPSKETNKNIDITANLNPKYTFDSFVCGASNQFAHAASQAVASNPASNYNPLFIYGGVGLGKTHLLIAIGNHIKENNKKAKICYYSSEKFMNEMINCLRYKKMDEFRNKFRKMDILLIDDIQFMAGKEATQEEFFHTFNALYESHKQIVVTSDKFPKDIPGLEERLRSRFEWGLIADIQPPDIETKIAILKKKSDLNSITLPNDVALFLASSATSNVRELEGMLIRLGAYASLTGSEITLNMARDILKDIIVEKTKDITVEMIQKHVAEHFKIKVSELKSDKRLKTFVVPRQIAIFICRELTKSSYPEIGEKFGGKDHSTIIHSVKKIEKQMANDLEIKNIVENLKKELIT</sequence>
<feature type="chain" id="PRO_1000079951" description="Chromosomal replication initiator protein DnaA">
    <location>
        <begin position="1"/>
        <end position="449"/>
    </location>
</feature>
<feature type="region of interest" description="Domain I, interacts with DnaA modulators" evidence="1">
    <location>
        <begin position="1"/>
        <end position="69"/>
    </location>
</feature>
<feature type="region of interest" description="Domain II" evidence="1">
    <location>
        <begin position="69"/>
        <end position="112"/>
    </location>
</feature>
<feature type="region of interest" description="Domain III, AAA+ region" evidence="1">
    <location>
        <begin position="113"/>
        <end position="329"/>
    </location>
</feature>
<feature type="region of interest" description="Domain IV, binds dsDNA" evidence="1">
    <location>
        <begin position="330"/>
        <end position="449"/>
    </location>
</feature>
<feature type="binding site" evidence="1">
    <location>
        <position position="157"/>
    </location>
    <ligand>
        <name>ATP</name>
        <dbReference type="ChEBI" id="CHEBI:30616"/>
    </ligand>
</feature>
<feature type="binding site" evidence="1">
    <location>
        <position position="159"/>
    </location>
    <ligand>
        <name>ATP</name>
        <dbReference type="ChEBI" id="CHEBI:30616"/>
    </ligand>
</feature>
<feature type="binding site" evidence="1">
    <location>
        <position position="160"/>
    </location>
    <ligand>
        <name>ATP</name>
        <dbReference type="ChEBI" id="CHEBI:30616"/>
    </ligand>
</feature>
<feature type="binding site" evidence="1">
    <location>
        <position position="161"/>
    </location>
    <ligand>
        <name>ATP</name>
        <dbReference type="ChEBI" id="CHEBI:30616"/>
    </ligand>
</feature>
<keyword id="KW-0067">ATP-binding</keyword>
<keyword id="KW-0963">Cytoplasm</keyword>
<keyword id="KW-0235">DNA replication</keyword>
<keyword id="KW-0238">DNA-binding</keyword>
<keyword id="KW-0446">Lipid-binding</keyword>
<keyword id="KW-0547">Nucleotide-binding</keyword>
<keyword id="KW-1185">Reference proteome</keyword>
<organism>
    <name type="scientific">Geotalea uraniireducens (strain Rf4)</name>
    <name type="common">Geobacter uraniireducens</name>
    <dbReference type="NCBI Taxonomy" id="351605"/>
    <lineage>
        <taxon>Bacteria</taxon>
        <taxon>Pseudomonadati</taxon>
        <taxon>Thermodesulfobacteriota</taxon>
        <taxon>Desulfuromonadia</taxon>
        <taxon>Geobacterales</taxon>
        <taxon>Geobacteraceae</taxon>
        <taxon>Geotalea</taxon>
    </lineage>
</organism>
<proteinExistence type="inferred from homology"/>
<protein>
    <recommendedName>
        <fullName evidence="1">Chromosomal replication initiator protein DnaA</fullName>
    </recommendedName>
</protein>
<evidence type="ECO:0000255" key="1">
    <source>
        <dbReference type="HAMAP-Rule" id="MF_00377"/>
    </source>
</evidence>
<gene>
    <name evidence="1" type="primary">dnaA</name>
    <name type="ordered locus">Gura_0001</name>
</gene>
<dbReference type="EMBL" id="CP000698">
    <property type="protein sequence ID" value="ABQ24219.1"/>
    <property type="molecule type" value="Genomic_DNA"/>
</dbReference>
<dbReference type="RefSeq" id="WP_011936948.1">
    <property type="nucleotide sequence ID" value="NC_009483.1"/>
</dbReference>
<dbReference type="SMR" id="A5GDX1"/>
<dbReference type="STRING" id="351605.Gura_0001"/>
<dbReference type="KEGG" id="gur:Gura_0001"/>
<dbReference type="HOGENOM" id="CLU_026910_3_1_7"/>
<dbReference type="OrthoDB" id="9807019at2"/>
<dbReference type="Proteomes" id="UP000006695">
    <property type="component" value="Chromosome"/>
</dbReference>
<dbReference type="GO" id="GO:0005737">
    <property type="term" value="C:cytoplasm"/>
    <property type="evidence" value="ECO:0007669"/>
    <property type="project" value="UniProtKB-SubCell"/>
</dbReference>
<dbReference type="GO" id="GO:0005886">
    <property type="term" value="C:plasma membrane"/>
    <property type="evidence" value="ECO:0007669"/>
    <property type="project" value="TreeGrafter"/>
</dbReference>
<dbReference type="GO" id="GO:0005524">
    <property type="term" value="F:ATP binding"/>
    <property type="evidence" value="ECO:0007669"/>
    <property type="project" value="UniProtKB-UniRule"/>
</dbReference>
<dbReference type="GO" id="GO:0016887">
    <property type="term" value="F:ATP hydrolysis activity"/>
    <property type="evidence" value="ECO:0007669"/>
    <property type="project" value="InterPro"/>
</dbReference>
<dbReference type="GO" id="GO:0003688">
    <property type="term" value="F:DNA replication origin binding"/>
    <property type="evidence" value="ECO:0007669"/>
    <property type="project" value="UniProtKB-UniRule"/>
</dbReference>
<dbReference type="GO" id="GO:0008289">
    <property type="term" value="F:lipid binding"/>
    <property type="evidence" value="ECO:0007669"/>
    <property type="project" value="UniProtKB-KW"/>
</dbReference>
<dbReference type="GO" id="GO:0006270">
    <property type="term" value="P:DNA replication initiation"/>
    <property type="evidence" value="ECO:0007669"/>
    <property type="project" value="UniProtKB-UniRule"/>
</dbReference>
<dbReference type="GO" id="GO:0006275">
    <property type="term" value="P:regulation of DNA replication"/>
    <property type="evidence" value="ECO:0007669"/>
    <property type="project" value="UniProtKB-UniRule"/>
</dbReference>
<dbReference type="CDD" id="cd00009">
    <property type="entry name" value="AAA"/>
    <property type="match status" value="1"/>
</dbReference>
<dbReference type="CDD" id="cd06571">
    <property type="entry name" value="Bac_DnaA_C"/>
    <property type="match status" value="1"/>
</dbReference>
<dbReference type="FunFam" id="1.10.8.60:FF:000003">
    <property type="entry name" value="Chromosomal replication initiator protein DnaA"/>
    <property type="match status" value="1"/>
</dbReference>
<dbReference type="FunFam" id="3.40.50.300:FF:000150">
    <property type="entry name" value="Chromosomal replication initiator protein DnaA"/>
    <property type="match status" value="1"/>
</dbReference>
<dbReference type="Gene3D" id="1.10.1750.10">
    <property type="match status" value="1"/>
</dbReference>
<dbReference type="Gene3D" id="1.10.8.60">
    <property type="match status" value="1"/>
</dbReference>
<dbReference type="Gene3D" id="3.30.300.180">
    <property type="match status" value="1"/>
</dbReference>
<dbReference type="Gene3D" id="3.40.50.300">
    <property type="entry name" value="P-loop containing nucleotide triphosphate hydrolases"/>
    <property type="match status" value="1"/>
</dbReference>
<dbReference type="HAMAP" id="MF_00377">
    <property type="entry name" value="DnaA_bact"/>
    <property type="match status" value="1"/>
</dbReference>
<dbReference type="InterPro" id="IPR003593">
    <property type="entry name" value="AAA+_ATPase"/>
</dbReference>
<dbReference type="InterPro" id="IPR001957">
    <property type="entry name" value="Chromosome_initiator_DnaA"/>
</dbReference>
<dbReference type="InterPro" id="IPR020591">
    <property type="entry name" value="Chromosome_initiator_DnaA-like"/>
</dbReference>
<dbReference type="InterPro" id="IPR018312">
    <property type="entry name" value="Chromosome_initiator_DnaA_CS"/>
</dbReference>
<dbReference type="InterPro" id="IPR013159">
    <property type="entry name" value="DnaA_C"/>
</dbReference>
<dbReference type="InterPro" id="IPR013317">
    <property type="entry name" value="DnaA_dom"/>
</dbReference>
<dbReference type="InterPro" id="IPR024633">
    <property type="entry name" value="DnaA_N_dom"/>
</dbReference>
<dbReference type="InterPro" id="IPR038454">
    <property type="entry name" value="DnaA_N_sf"/>
</dbReference>
<dbReference type="InterPro" id="IPR027417">
    <property type="entry name" value="P-loop_NTPase"/>
</dbReference>
<dbReference type="InterPro" id="IPR010921">
    <property type="entry name" value="Trp_repressor/repl_initiator"/>
</dbReference>
<dbReference type="NCBIfam" id="TIGR00362">
    <property type="entry name" value="DnaA"/>
    <property type="match status" value="1"/>
</dbReference>
<dbReference type="PANTHER" id="PTHR30050">
    <property type="entry name" value="CHROMOSOMAL REPLICATION INITIATOR PROTEIN DNAA"/>
    <property type="match status" value="1"/>
</dbReference>
<dbReference type="PANTHER" id="PTHR30050:SF2">
    <property type="entry name" value="CHROMOSOMAL REPLICATION INITIATOR PROTEIN DNAA"/>
    <property type="match status" value="1"/>
</dbReference>
<dbReference type="Pfam" id="PF00308">
    <property type="entry name" value="Bac_DnaA"/>
    <property type="match status" value="1"/>
</dbReference>
<dbReference type="Pfam" id="PF08299">
    <property type="entry name" value="Bac_DnaA_C"/>
    <property type="match status" value="1"/>
</dbReference>
<dbReference type="Pfam" id="PF11638">
    <property type="entry name" value="DnaA_N"/>
    <property type="match status" value="1"/>
</dbReference>
<dbReference type="PRINTS" id="PR00051">
    <property type="entry name" value="DNAA"/>
</dbReference>
<dbReference type="SMART" id="SM00382">
    <property type="entry name" value="AAA"/>
    <property type="match status" value="1"/>
</dbReference>
<dbReference type="SMART" id="SM00760">
    <property type="entry name" value="Bac_DnaA_C"/>
    <property type="match status" value="1"/>
</dbReference>
<dbReference type="SUPFAM" id="SSF52540">
    <property type="entry name" value="P-loop containing nucleoside triphosphate hydrolases"/>
    <property type="match status" value="1"/>
</dbReference>
<dbReference type="SUPFAM" id="SSF48295">
    <property type="entry name" value="TrpR-like"/>
    <property type="match status" value="1"/>
</dbReference>
<dbReference type="PROSITE" id="PS01008">
    <property type="entry name" value="DNAA"/>
    <property type="match status" value="1"/>
</dbReference>
<reference key="1">
    <citation type="submission" date="2007-05" db="EMBL/GenBank/DDBJ databases">
        <title>Complete sequence of Geobacter uraniireducens Rf4.</title>
        <authorList>
            <consortium name="US DOE Joint Genome Institute"/>
            <person name="Copeland A."/>
            <person name="Lucas S."/>
            <person name="Lapidus A."/>
            <person name="Barry K."/>
            <person name="Detter J.C."/>
            <person name="Glavina del Rio T."/>
            <person name="Hammon N."/>
            <person name="Israni S."/>
            <person name="Dalin E."/>
            <person name="Tice H."/>
            <person name="Pitluck S."/>
            <person name="Chertkov O."/>
            <person name="Brettin T."/>
            <person name="Bruce D."/>
            <person name="Han C."/>
            <person name="Schmutz J."/>
            <person name="Larimer F."/>
            <person name="Land M."/>
            <person name="Hauser L."/>
            <person name="Kyrpides N."/>
            <person name="Mikhailova N."/>
            <person name="Shelobolina E."/>
            <person name="Aklujkar M."/>
            <person name="Lovley D."/>
            <person name="Richardson P."/>
        </authorList>
    </citation>
    <scope>NUCLEOTIDE SEQUENCE [LARGE SCALE GENOMIC DNA]</scope>
    <source>
        <strain>ATCC BAA-1134 / JCM 13001 / Rf4</strain>
    </source>
</reference>
<name>DNAA_GEOUR</name>
<comment type="function">
    <text evidence="1">Plays an essential role in the initiation and regulation of chromosomal replication. ATP-DnaA binds to the origin of replication (oriC) to initiate formation of the DNA replication initiation complex once per cell cycle. Binds the DnaA box (a 9 base pair repeat at the origin) and separates the double-stranded (ds)DNA. Forms a right-handed helical filament on oriC DNA; dsDNA binds to the exterior of the filament while single-stranded (ss)DNA is stabiized in the filament's interior. The ATP-DnaA-oriC complex binds and stabilizes one strand of the AT-rich DNA unwinding element (DUE), permitting loading of DNA polymerase. After initiation quickly degrades to an ADP-DnaA complex that is not apt for DNA replication. Binds acidic phospholipids.</text>
</comment>
<comment type="subunit">
    <text evidence="1">Oligomerizes as a right-handed, spiral filament on DNA at oriC.</text>
</comment>
<comment type="subcellular location">
    <subcellularLocation>
        <location evidence="1">Cytoplasm</location>
    </subcellularLocation>
</comment>
<comment type="domain">
    <text evidence="1">Domain I is involved in oligomerization and binding regulators, domain II is flexibile and of varying length in different bacteria, domain III forms the AAA+ region, while domain IV binds dsDNA.</text>
</comment>
<comment type="similarity">
    <text evidence="1">Belongs to the DnaA family.</text>
</comment>